<name>LSPA_STAAS</name>
<organism>
    <name type="scientific">Staphylococcus aureus (strain MSSA476)</name>
    <dbReference type="NCBI Taxonomy" id="282459"/>
    <lineage>
        <taxon>Bacteria</taxon>
        <taxon>Bacillati</taxon>
        <taxon>Bacillota</taxon>
        <taxon>Bacilli</taxon>
        <taxon>Bacillales</taxon>
        <taxon>Staphylococcaceae</taxon>
        <taxon>Staphylococcus</taxon>
    </lineage>
</organism>
<keyword id="KW-0064">Aspartyl protease</keyword>
<keyword id="KW-1003">Cell membrane</keyword>
<keyword id="KW-0378">Hydrolase</keyword>
<keyword id="KW-0472">Membrane</keyword>
<keyword id="KW-0645">Protease</keyword>
<keyword id="KW-0812">Transmembrane</keyword>
<keyword id="KW-1133">Transmembrane helix</keyword>
<comment type="function">
    <text evidence="1">This protein specifically catalyzes the removal of signal peptides from prolipoproteins.</text>
</comment>
<comment type="catalytic activity">
    <reaction evidence="1">
        <text>Release of signal peptides from bacterial membrane prolipoproteins. Hydrolyzes -Xaa-Yaa-Zaa-|-(S,diacylglyceryl)Cys-, in which Xaa is hydrophobic (preferably Leu), and Yaa (Ala or Ser) and Zaa (Gly or Ala) have small, neutral side chains.</text>
        <dbReference type="EC" id="3.4.23.36"/>
    </reaction>
</comment>
<comment type="pathway">
    <text evidence="1">Protein modification; lipoprotein biosynthesis (signal peptide cleavage).</text>
</comment>
<comment type="subcellular location">
    <subcellularLocation>
        <location evidence="1">Cell membrane</location>
        <topology evidence="1">Multi-pass membrane protein</topology>
    </subcellularLocation>
</comment>
<comment type="similarity">
    <text evidence="1">Belongs to the peptidase A8 family.</text>
</comment>
<reference key="1">
    <citation type="journal article" date="2004" name="Proc. Natl. Acad. Sci. U.S.A.">
        <title>Complete genomes of two clinical Staphylococcus aureus strains: evidence for the rapid evolution of virulence and drug resistance.</title>
        <authorList>
            <person name="Holden M.T.G."/>
            <person name="Feil E.J."/>
            <person name="Lindsay J.A."/>
            <person name="Peacock S.J."/>
            <person name="Day N.P.J."/>
            <person name="Enright M.C."/>
            <person name="Foster T.J."/>
            <person name="Moore C.E."/>
            <person name="Hurst L."/>
            <person name="Atkin R."/>
            <person name="Barron A."/>
            <person name="Bason N."/>
            <person name="Bentley S.D."/>
            <person name="Chillingworth C."/>
            <person name="Chillingworth T."/>
            <person name="Churcher C."/>
            <person name="Clark L."/>
            <person name="Corton C."/>
            <person name="Cronin A."/>
            <person name="Doggett J."/>
            <person name="Dowd L."/>
            <person name="Feltwell T."/>
            <person name="Hance Z."/>
            <person name="Harris B."/>
            <person name="Hauser H."/>
            <person name="Holroyd S."/>
            <person name="Jagels K."/>
            <person name="James K.D."/>
            <person name="Lennard N."/>
            <person name="Line A."/>
            <person name="Mayes R."/>
            <person name="Moule S."/>
            <person name="Mungall K."/>
            <person name="Ormond D."/>
            <person name="Quail M.A."/>
            <person name="Rabbinowitsch E."/>
            <person name="Rutherford K.M."/>
            <person name="Sanders M."/>
            <person name="Sharp S."/>
            <person name="Simmonds M."/>
            <person name="Stevens K."/>
            <person name="Whitehead S."/>
            <person name="Barrell B.G."/>
            <person name="Spratt B.G."/>
            <person name="Parkhill J."/>
        </authorList>
    </citation>
    <scope>NUCLEOTIDE SEQUENCE [LARGE SCALE GENOMIC DNA]</scope>
    <source>
        <strain>MSSA476</strain>
    </source>
</reference>
<evidence type="ECO:0000255" key="1">
    <source>
        <dbReference type="HAMAP-Rule" id="MF_00161"/>
    </source>
</evidence>
<sequence>MHKKYFIGTSILIAVFVVIFDQVTKYIIATTMKIGDSFEVIPHFLNITSHRNNGAAWGILSGKMTFFFIITIIILIALVYFFIKDAQYNLFMQVAISLLFAGALGNFIDRILTGEVVDFIDTNIFGYDFPIFNIADSSLTIGVILIIIALLKDTSNKKEKEVK</sequence>
<protein>
    <recommendedName>
        <fullName evidence="1">Lipoprotein signal peptidase</fullName>
        <ecNumber evidence="1">3.4.23.36</ecNumber>
    </recommendedName>
    <alternativeName>
        <fullName evidence="1">Prolipoprotein signal peptidase</fullName>
    </alternativeName>
    <alternativeName>
        <fullName evidence="1">Signal peptidase II</fullName>
        <shortName evidence="1">SPase II</shortName>
    </alternativeName>
</protein>
<proteinExistence type="inferred from homology"/>
<feature type="chain" id="PRO_0000178816" description="Lipoprotein signal peptidase">
    <location>
        <begin position="1"/>
        <end position="163"/>
    </location>
</feature>
<feature type="transmembrane region" description="Helical" evidence="1">
    <location>
        <begin position="11"/>
        <end position="31"/>
    </location>
</feature>
<feature type="transmembrane region" description="Helical" evidence="1">
    <location>
        <begin position="63"/>
        <end position="83"/>
    </location>
</feature>
<feature type="transmembrane region" description="Helical" evidence="1">
    <location>
        <begin position="88"/>
        <end position="108"/>
    </location>
</feature>
<feature type="transmembrane region" description="Helical" evidence="1">
    <location>
        <begin position="131"/>
        <end position="151"/>
    </location>
</feature>
<feature type="active site" evidence="1">
    <location>
        <position position="118"/>
    </location>
</feature>
<feature type="active site" evidence="1">
    <location>
        <position position="136"/>
    </location>
</feature>
<gene>
    <name evidence="1" type="primary">lspA</name>
    <name type="synonym">lsp</name>
    <name type="ordered locus">SAS1130</name>
</gene>
<dbReference type="EC" id="3.4.23.36" evidence="1"/>
<dbReference type="EMBL" id="BX571857">
    <property type="protein sequence ID" value="CAG42907.1"/>
    <property type="molecule type" value="Genomic_DNA"/>
</dbReference>
<dbReference type="RefSeq" id="WP_000549207.1">
    <property type="nucleotide sequence ID" value="NC_002953.3"/>
</dbReference>
<dbReference type="SMR" id="Q6GA17"/>
<dbReference type="KEGG" id="sas:SAS1130"/>
<dbReference type="HOGENOM" id="CLU_083252_3_0_9"/>
<dbReference type="UniPathway" id="UPA00665"/>
<dbReference type="GO" id="GO:0005886">
    <property type="term" value="C:plasma membrane"/>
    <property type="evidence" value="ECO:0007669"/>
    <property type="project" value="UniProtKB-SubCell"/>
</dbReference>
<dbReference type="GO" id="GO:0004190">
    <property type="term" value="F:aspartic-type endopeptidase activity"/>
    <property type="evidence" value="ECO:0007669"/>
    <property type="project" value="UniProtKB-UniRule"/>
</dbReference>
<dbReference type="GO" id="GO:0006508">
    <property type="term" value="P:proteolysis"/>
    <property type="evidence" value="ECO:0007669"/>
    <property type="project" value="UniProtKB-KW"/>
</dbReference>
<dbReference type="HAMAP" id="MF_00161">
    <property type="entry name" value="LspA"/>
    <property type="match status" value="1"/>
</dbReference>
<dbReference type="InterPro" id="IPR001872">
    <property type="entry name" value="Peptidase_A8"/>
</dbReference>
<dbReference type="NCBIfam" id="TIGR00077">
    <property type="entry name" value="lspA"/>
    <property type="match status" value="1"/>
</dbReference>
<dbReference type="PANTHER" id="PTHR33695">
    <property type="entry name" value="LIPOPROTEIN SIGNAL PEPTIDASE"/>
    <property type="match status" value="1"/>
</dbReference>
<dbReference type="PANTHER" id="PTHR33695:SF1">
    <property type="entry name" value="LIPOPROTEIN SIGNAL PEPTIDASE"/>
    <property type="match status" value="1"/>
</dbReference>
<dbReference type="Pfam" id="PF01252">
    <property type="entry name" value="Peptidase_A8"/>
    <property type="match status" value="1"/>
</dbReference>
<dbReference type="PRINTS" id="PR00781">
    <property type="entry name" value="LIPOSIGPTASE"/>
</dbReference>
<dbReference type="PROSITE" id="PS00855">
    <property type="entry name" value="SPASE_II"/>
    <property type="match status" value="1"/>
</dbReference>
<accession>Q6GA17</accession>